<reference key="1">
    <citation type="journal article" date="2007" name="Environ. Microbiol.">
        <title>Whole-genome analysis of the ammonia-oxidizing bacterium, Nitrosomonas eutropha C91: implications for niche adaptation.</title>
        <authorList>
            <person name="Stein L.Y."/>
            <person name="Arp D.J."/>
            <person name="Berube P.M."/>
            <person name="Chain P.S."/>
            <person name="Hauser L."/>
            <person name="Jetten M.S."/>
            <person name="Klotz M.G."/>
            <person name="Larimer F.W."/>
            <person name="Norton J.M."/>
            <person name="Op den Camp H.J.M."/>
            <person name="Shin M."/>
            <person name="Wei X."/>
        </authorList>
    </citation>
    <scope>NUCLEOTIDE SEQUENCE [LARGE SCALE GENOMIC DNA]</scope>
    <source>
        <strain>DSM 101675 / C91 / Nm57</strain>
    </source>
</reference>
<protein>
    <recommendedName>
        <fullName evidence="1">Integration host factor subunit beta</fullName>
        <shortName evidence="1">IHF-beta</shortName>
    </recommendedName>
</protein>
<proteinExistence type="inferred from homology"/>
<keyword id="KW-0233">DNA recombination</keyword>
<keyword id="KW-0238">DNA-binding</keyword>
<keyword id="KW-0804">Transcription</keyword>
<keyword id="KW-0805">Transcription regulation</keyword>
<keyword id="KW-0810">Translation regulation</keyword>
<accession>Q0AIZ2</accession>
<gene>
    <name evidence="1" type="primary">ihfB</name>
    <name evidence="1" type="synonym">himD</name>
    <name type="ordered locus">Neut_0401</name>
</gene>
<sequence>MTKSELISKLAERFPQLLAKDAELVVKIILDAMAKSLARGERIEIRGFGSFDLNYRPSRVGRNPKSGEKVHVPEKYVPHFKAGKKMRELIDSSHKQHNLLDQATG</sequence>
<comment type="function">
    <text evidence="1">This protein is one of the two subunits of integration host factor, a specific DNA-binding protein that functions in genetic recombination as well as in transcriptional and translational control.</text>
</comment>
<comment type="subunit">
    <text evidence="1">Heterodimer of an alpha and a beta chain.</text>
</comment>
<comment type="similarity">
    <text evidence="1">Belongs to the bacterial histone-like protein family.</text>
</comment>
<feature type="chain" id="PRO_1000122222" description="Integration host factor subunit beta">
    <location>
        <begin position="1"/>
        <end position="105"/>
    </location>
</feature>
<organism>
    <name type="scientific">Nitrosomonas eutropha (strain DSM 101675 / C91 / Nm57)</name>
    <dbReference type="NCBI Taxonomy" id="335283"/>
    <lineage>
        <taxon>Bacteria</taxon>
        <taxon>Pseudomonadati</taxon>
        <taxon>Pseudomonadota</taxon>
        <taxon>Betaproteobacteria</taxon>
        <taxon>Nitrosomonadales</taxon>
        <taxon>Nitrosomonadaceae</taxon>
        <taxon>Nitrosomonas</taxon>
    </lineage>
</organism>
<name>IHFB_NITEC</name>
<dbReference type="EMBL" id="CP000450">
    <property type="protein sequence ID" value="ABI58679.1"/>
    <property type="molecule type" value="Genomic_DNA"/>
</dbReference>
<dbReference type="RefSeq" id="WP_011633521.1">
    <property type="nucleotide sequence ID" value="NC_008344.1"/>
</dbReference>
<dbReference type="SMR" id="Q0AIZ2"/>
<dbReference type="STRING" id="335283.Neut_0401"/>
<dbReference type="KEGG" id="net:Neut_0401"/>
<dbReference type="eggNOG" id="COG0776">
    <property type="taxonomic scope" value="Bacteria"/>
</dbReference>
<dbReference type="HOGENOM" id="CLU_105066_2_0_4"/>
<dbReference type="OrthoDB" id="9804203at2"/>
<dbReference type="Proteomes" id="UP000001966">
    <property type="component" value="Chromosome"/>
</dbReference>
<dbReference type="GO" id="GO:0005694">
    <property type="term" value="C:chromosome"/>
    <property type="evidence" value="ECO:0007669"/>
    <property type="project" value="InterPro"/>
</dbReference>
<dbReference type="GO" id="GO:0005829">
    <property type="term" value="C:cytosol"/>
    <property type="evidence" value="ECO:0007669"/>
    <property type="project" value="TreeGrafter"/>
</dbReference>
<dbReference type="GO" id="GO:0003677">
    <property type="term" value="F:DNA binding"/>
    <property type="evidence" value="ECO:0007669"/>
    <property type="project" value="UniProtKB-UniRule"/>
</dbReference>
<dbReference type="GO" id="GO:0030527">
    <property type="term" value="F:structural constituent of chromatin"/>
    <property type="evidence" value="ECO:0007669"/>
    <property type="project" value="InterPro"/>
</dbReference>
<dbReference type="GO" id="GO:0006310">
    <property type="term" value="P:DNA recombination"/>
    <property type="evidence" value="ECO:0007669"/>
    <property type="project" value="UniProtKB-UniRule"/>
</dbReference>
<dbReference type="GO" id="GO:0006355">
    <property type="term" value="P:regulation of DNA-templated transcription"/>
    <property type="evidence" value="ECO:0007669"/>
    <property type="project" value="UniProtKB-UniRule"/>
</dbReference>
<dbReference type="GO" id="GO:0006417">
    <property type="term" value="P:regulation of translation"/>
    <property type="evidence" value="ECO:0007669"/>
    <property type="project" value="UniProtKB-UniRule"/>
</dbReference>
<dbReference type="CDD" id="cd13836">
    <property type="entry name" value="IHF_B"/>
    <property type="match status" value="1"/>
</dbReference>
<dbReference type="Gene3D" id="4.10.520.10">
    <property type="entry name" value="IHF-like DNA-binding proteins"/>
    <property type="match status" value="1"/>
</dbReference>
<dbReference type="HAMAP" id="MF_00381">
    <property type="entry name" value="IHF_beta"/>
    <property type="match status" value="1"/>
</dbReference>
<dbReference type="InterPro" id="IPR000119">
    <property type="entry name" value="Hist_DNA-bd"/>
</dbReference>
<dbReference type="InterPro" id="IPR010992">
    <property type="entry name" value="IHF-like_DNA-bd_dom_sf"/>
</dbReference>
<dbReference type="InterPro" id="IPR005685">
    <property type="entry name" value="IHF_beta"/>
</dbReference>
<dbReference type="NCBIfam" id="TIGR00988">
    <property type="entry name" value="hip"/>
    <property type="match status" value="1"/>
</dbReference>
<dbReference type="NCBIfam" id="NF001222">
    <property type="entry name" value="PRK00199.1"/>
    <property type="match status" value="1"/>
</dbReference>
<dbReference type="PANTHER" id="PTHR33175">
    <property type="entry name" value="DNA-BINDING PROTEIN HU"/>
    <property type="match status" value="1"/>
</dbReference>
<dbReference type="PANTHER" id="PTHR33175:SF5">
    <property type="entry name" value="INTEGRATION HOST FACTOR SUBUNIT BETA"/>
    <property type="match status" value="1"/>
</dbReference>
<dbReference type="Pfam" id="PF00216">
    <property type="entry name" value="Bac_DNA_binding"/>
    <property type="match status" value="1"/>
</dbReference>
<dbReference type="PRINTS" id="PR01727">
    <property type="entry name" value="DNABINDINGHU"/>
</dbReference>
<dbReference type="SMART" id="SM00411">
    <property type="entry name" value="BHL"/>
    <property type="match status" value="1"/>
</dbReference>
<dbReference type="SUPFAM" id="SSF47729">
    <property type="entry name" value="IHF-like DNA-binding proteins"/>
    <property type="match status" value="1"/>
</dbReference>
<evidence type="ECO:0000255" key="1">
    <source>
        <dbReference type="HAMAP-Rule" id="MF_00381"/>
    </source>
</evidence>